<evidence type="ECO:0000250" key="1"/>
<evidence type="ECO:0000250" key="2">
    <source>
        <dbReference type="UniProtKB" id="P26641"/>
    </source>
</evidence>
<evidence type="ECO:0000250" key="3">
    <source>
        <dbReference type="UniProtKB" id="Q9D8N0"/>
    </source>
</evidence>
<evidence type="ECO:0000255" key="4">
    <source>
        <dbReference type="PROSITE-ProRule" id="PRU00519"/>
    </source>
</evidence>
<evidence type="ECO:0000256" key="5">
    <source>
        <dbReference type="SAM" id="MobiDB-lite"/>
    </source>
</evidence>
<name>EF1G_BOVIN</name>
<proteinExistence type="evidence at transcript level"/>
<protein>
    <recommendedName>
        <fullName>Elongation factor 1-gamma</fullName>
        <shortName>EF-1-gamma</shortName>
    </recommendedName>
    <alternativeName>
        <fullName>eEF-1B gamma</fullName>
    </alternativeName>
</protein>
<accession>Q3SZV3</accession>
<keyword id="KW-0007">Acetylation</keyword>
<keyword id="KW-0251">Elongation factor</keyword>
<keyword id="KW-1017">Isopeptide bond</keyword>
<keyword id="KW-0648">Protein biosynthesis</keyword>
<keyword id="KW-1185">Reference proteome</keyword>
<keyword id="KW-0832">Ubl conjugation</keyword>
<organism>
    <name type="scientific">Bos taurus</name>
    <name type="common">Bovine</name>
    <dbReference type="NCBI Taxonomy" id="9913"/>
    <lineage>
        <taxon>Eukaryota</taxon>
        <taxon>Metazoa</taxon>
        <taxon>Chordata</taxon>
        <taxon>Craniata</taxon>
        <taxon>Vertebrata</taxon>
        <taxon>Euteleostomi</taxon>
        <taxon>Mammalia</taxon>
        <taxon>Eutheria</taxon>
        <taxon>Laurasiatheria</taxon>
        <taxon>Artiodactyla</taxon>
        <taxon>Ruminantia</taxon>
        <taxon>Pecora</taxon>
        <taxon>Bovidae</taxon>
        <taxon>Bovinae</taxon>
        <taxon>Bos</taxon>
    </lineage>
</organism>
<feature type="initiator methionine" description="Removed" evidence="2">
    <location>
        <position position="1"/>
    </location>
</feature>
<feature type="chain" id="PRO_0000284654" description="Elongation factor 1-gamma">
    <location>
        <begin position="2"/>
        <end position="440"/>
    </location>
</feature>
<feature type="domain" description="GST N-terminal">
    <location>
        <begin position="2"/>
        <end position="87"/>
    </location>
</feature>
<feature type="domain" description="GST C-terminal">
    <location>
        <begin position="88"/>
        <end position="216"/>
    </location>
</feature>
<feature type="domain" description="EF-1-gamma C-terminal" evidence="4">
    <location>
        <begin position="279"/>
        <end position="440"/>
    </location>
</feature>
<feature type="region of interest" description="Disordered" evidence="5">
    <location>
        <begin position="221"/>
        <end position="267"/>
    </location>
</feature>
<feature type="compositionally biased region" description="Basic and acidic residues" evidence="5">
    <location>
        <begin position="221"/>
        <end position="257"/>
    </location>
</feature>
<feature type="modified residue" description="N-acetylalanine" evidence="2">
    <location>
        <position position="2"/>
    </location>
</feature>
<feature type="modified residue" description="N6-acetyllysine" evidence="2">
    <location>
        <position position="147"/>
    </location>
</feature>
<feature type="modified residue" description="N6-acetyllysine" evidence="3">
    <location>
        <position position="212"/>
    </location>
</feature>
<feature type="modified residue" description="N6-acetyllysine" evidence="3">
    <location>
        <position position="404"/>
    </location>
</feature>
<feature type="modified residue" description="N6-acetyllysine; alternate" evidence="2">
    <location>
        <position position="437"/>
    </location>
</feature>
<feature type="modified residue" description="N6-malonyllysine; alternate" evidence="1">
    <location>
        <position position="437"/>
    </location>
</feature>
<feature type="cross-link" description="Glycyl lysine isopeptide (Lys-Gly) (interchain with G-Cter in SUMO1)" evidence="2">
    <location>
        <position position="256"/>
    </location>
</feature>
<feature type="cross-link" description="Glycyl lysine isopeptide (Lys-Gly) (interchain with G-Cter in SUMO2)" evidence="2">
    <location>
        <position position="288"/>
    </location>
</feature>
<gene>
    <name type="primary">EEF1G</name>
</gene>
<comment type="function">
    <text evidence="1">Probably plays a role in anchoring the complex to other cellular components.</text>
</comment>
<comment type="subunit">
    <text evidence="1">EF-1 is composed of four subunits: alpha, beta, delta, and gamma.</text>
</comment>
<dbReference type="EMBL" id="BC102691">
    <property type="protein sequence ID" value="AAI02692.1"/>
    <property type="molecule type" value="mRNA"/>
</dbReference>
<dbReference type="RefSeq" id="NP_001035577.1">
    <property type="nucleotide sequence ID" value="NM_001040487.2"/>
</dbReference>
<dbReference type="BMRB" id="Q3SZV3"/>
<dbReference type="SMR" id="Q3SZV3"/>
<dbReference type="FunCoup" id="Q3SZV3">
    <property type="interactions" value="2487"/>
</dbReference>
<dbReference type="STRING" id="9913.ENSBTAP00000015716"/>
<dbReference type="PaxDb" id="9913-ENSBTAP00000015716"/>
<dbReference type="PeptideAtlas" id="Q3SZV3"/>
<dbReference type="GeneID" id="326581"/>
<dbReference type="KEGG" id="bta:326581"/>
<dbReference type="CTD" id="1937"/>
<dbReference type="eggNOG" id="KOG0867">
    <property type="taxonomic scope" value="Eukaryota"/>
</dbReference>
<dbReference type="eggNOG" id="KOG1627">
    <property type="taxonomic scope" value="Eukaryota"/>
</dbReference>
<dbReference type="InParanoid" id="Q3SZV3"/>
<dbReference type="OrthoDB" id="249703at2759"/>
<dbReference type="Proteomes" id="UP000009136">
    <property type="component" value="Unplaced"/>
</dbReference>
<dbReference type="GO" id="GO:0005737">
    <property type="term" value="C:cytoplasm"/>
    <property type="evidence" value="ECO:0000318"/>
    <property type="project" value="GO_Central"/>
</dbReference>
<dbReference type="GO" id="GO:0005634">
    <property type="term" value="C:nucleus"/>
    <property type="evidence" value="ECO:0000318"/>
    <property type="project" value="GO_Central"/>
</dbReference>
<dbReference type="GO" id="GO:0003746">
    <property type="term" value="F:translation elongation factor activity"/>
    <property type="evidence" value="ECO:0007669"/>
    <property type="project" value="UniProtKB-KW"/>
</dbReference>
<dbReference type="GO" id="GO:0006414">
    <property type="term" value="P:translational elongation"/>
    <property type="evidence" value="ECO:0000318"/>
    <property type="project" value="GO_Central"/>
</dbReference>
<dbReference type="CDD" id="cd03181">
    <property type="entry name" value="GST_C_EF1Bgamma_like"/>
    <property type="match status" value="1"/>
</dbReference>
<dbReference type="CDD" id="cd03044">
    <property type="entry name" value="GST_N_EF1Bgamma"/>
    <property type="match status" value="1"/>
</dbReference>
<dbReference type="FunFam" id="1.20.1050.10:FF:000021">
    <property type="entry name" value="Elongation factor 1-gamma"/>
    <property type="match status" value="1"/>
</dbReference>
<dbReference type="FunFam" id="3.40.30.10:FF:000088">
    <property type="entry name" value="Elongation factor 1-gamma"/>
    <property type="match status" value="1"/>
</dbReference>
<dbReference type="FunFam" id="3.30.70.1010:FF:000001">
    <property type="entry name" value="Elongation factor 1-gamma 1"/>
    <property type="match status" value="1"/>
</dbReference>
<dbReference type="Gene3D" id="1.20.1050.10">
    <property type="match status" value="1"/>
</dbReference>
<dbReference type="Gene3D" id="3.40.30.10">
    <property type="entry name" value="Glutaredoxin"/>
    <property type="match status" value="1"/>
</dbReference>
<dbReference type="Gene3D" id="3.30.70.1010">
    <property type="entry name" value="Translation elongation factor EF1B, gamma chain, conserved domain"/>
    <property type="match status" value="1"/>
</dbReference>
<dbReference type="InterPro" id="IPR050802">
    <property type="entry name" value="EF-GSTs"/>
</dbReference>
<dbReference type="InterPro" id="IPR001662">
    <property type="entry name" value="EF1B_G_C"/>
</dbReference>
<dbReference type="InterPro" id="IPR036433">
    <property type="entry name" value="EF1B_G_C_sf"/>
</dbReference>
<dbReference type="InterPro" id="IPR010987">
    <property type="entry name" value="Glutathione-S-Trfase_C-like"/>
</dbReference>
<dbReference type="InterPro" id="IPR036282">
    <property type="entry name" value="Glutathione-S-Trfase_C_sf"/>
</dbReference>
<dbReference type="InterPro" id="IPR040079">
    <property type="entry name" value="Glutathione_S-Trfase"/>
</dbReference>
<dbReference type="InterPro" id="IPR004045">
    <property type="entry name" value="Glutathione_S-Trfase_N"/>
</dbReference>
<dbReference type="InterPro" id="IPR004046">
    <property type="entry name" value="GST_C"/>
</dbReference>
<dbReference type="InterPro" id="IPR036249">
    <property type="entry name" value="Thioredoxin-like_sf"/>
</dbReference>
<dbReference type="PANTHER" id="PTHR43986">
    <property type="entry name" value="ELONGATION FACTOR 1-GAMMA"/>
    <property type="match status" value="1"/>
</dbReference>
<dbReference type="PANTHER" id="PTHR43986:SF13">
    <property type="entry name" value="ELONGATION FACTOR 1-GAMMA"/>
    <property type="match status" value="1"/>
</dbReference>
<dbReference type="Pfam" id="PF00647">
    <property type="entry name" value="EF1G"/>
    <property type="match status" value="1"/>
</dbReference>
<dbReference type="Pfam" id="PF00043">
    <property type="entry name" value="GST_C"/>
    <property type="match status" value="1"/>
</dbReference>
<dbReference type="Pfam" id="PF02798">
    <property type="entry name" value="GST_N"/>
    <property type="match status" value="1"/>
</dbReference>
<dbReference type="SFLD" id="SFLDS00019">
    <property type="entry name" value="Glutathione_Transferase_(cytos"/>
    <property type="match status" value="1"/>
</dbReference>
<dbReference type="SFLD" id="SFLDG00358">
    <property type="entry name" value="Main_(cytGST)"/>
    <property type="match status" value="1"/>
</dbReference>
<dbReference type="SMART" id="SM01183">
    <property type="entry name" value="EF1G"/>
    <property type="match status" value="1"/>
</dbReference>
<dbReference type="SUPFAM" id="SSF89942">
    <property type="entry name" value="eEF1-gamma domain"/>
    <property type="match status" value="1"/>
</dbReference>
<dbReference type="SUPFAM" id="SSF47616">
    <property type="entry name" value="GST C-terminal domain-like"/>
    <property type="match status" value="1"/>
</dbReference>
<dbReference type="SUPFAM" id="SSF52833">
    <property type="entry name" value="Thioredoxin-like"/>
    <property type="match status" value="1"/>
</dbReference>
<dbReference type="PROSITE" id="PS50040">
    <property type="entry name" value="EF1G_C"/>
    <property type="match status" value="1"/>
</dbReference>
<dbReference type="PROSITE" id="PS50405">
    <property type="entry name" value="GST_CTER"/>
    <property type="match status" value="1"/>
</dbReference>
<dbReference type="PROSITE" id="PS50404">
    <property type="entry name" value="GST_NTER"/>
    <property type="match status" value="1"/>
</dbReference>
<sequence length="440" mass="50378">MAAGTLYTYPENWRAFKALIAAQYSGAQVRVLSAPPHFHFGQTNRTPEFLRKFPAGKVPAFEGDDGFCVFESNAIAYYVSNEELRGSTPEAAAQVVQWVSFADSDIVPPASTWVFPTLGIMHHNKQATENAKEEVRRILGLLDAHLKTRTFLVGERVTLADITVVCTLLWLYKQVLEPSFRQAFPNTNRWFLTCINQPQFRAVLGEVKLCEKMAQFDAKKFAESQPKKDTPRKEKGSREEKLKPQAERKEGKEEKKAAAPAPEEELDECEQALAAEPKAKDPFAHLPKSTFVLDEFKRKYSNEDTLSVALPYFWDHFDKDGWSLWYSEYRFPEELTQTFMSCNLITGMFQRLDKLRKNAFASVILFGTNNSSSISGVWDFRGQELAFPLSPDWQVDYESYTWRKLDPGSEETQTLVREYFCWEGAFQHVGKAFNQGKIFK</sequence>
<reference key="1">
    <citation type="submission" date="2005-08" db="EMBL/GenBank/DDBJ databases">
        <authorList>
            <consortium name="NIH - Mammalian Gene Collection (MGC) project"/>
        </authorList>
    </citation>
    <scope>NUCLEOTIDE SEQUENCE [LARGE SCALE MRNA]</scope>
    <source>
        <strain>Hereford</strain>
        <tissue>Testis</tissue>
    </source>
</reference>